<organism>
    <name type="scientific">Helicobacter pylori (strain P12)</name>
    <dbReference type="NCBI Taxonomy" id="570508"/>
    <lineage>
        <taxon>Bacteria</taxon>
        <taxon>Pseudomonadati</taxon>
        <taxon>Campylobacterota</taxon>
        <taxon>Epsilonproteobacteria</taxon>
        <taxon>Campylobacterales</taxon>
        <taxon>Helicobacteraceae</taxon>
        <taxon>Helicobacter</taxon>
    </lineage>
</organism>
<name>LPXB_HELP2</name>
<protein>
    <recommendedName>
        <fullName evidence="1">Lipid-A-disaccharide synthase</fullName>
        <ecNumber evidence="1">2.4.1.182</ecNumber>
    </recommendedName>
</protein>
<accession>B6JM91</accession>
<feature type="chain" id="PRO_1000123051" description="Lipid-A-disaccharide synthase">
    <location>
        <begin position="1"/>
        <end position="360"/>
    </location>
</feature>
<sequence>MPTILVSALEASSNVHLEELRHNLPKDYRFIGVFEGKNALYSPREFSVMGFRDVIGRLGFLLKAHKEMVQLAKQADMVLLMDSSSFNIPLAKKIKKQDPHKKIMYYILPQVWAWKKWRAKSLEKYCDFLGAILPFEVGYYQKKAQYVGHPLLDEIKYYKKDIKGETLVFMPGSRKSEIAKMFPLFVKAAQILEQNEGFKRRVLVVPSFFKGLDLKALYGEDIKLFEISYDAHKSLFEAEFAFICSGTATLEAALIGTPFVLAYRAKTMDFLIARMLVNLHYIGLANIFYNALNNETPGLGESQLHPELIQHFLSVEGLLKAYEEMDRERYFKESLRLREYLASGSTRKIANEMAFLLNLT</sequence>
<keyword id="KW-0328">Glycosyltransferase</keyword>
<keyword id="KW-0441">Lipid A biosynthesis</keyword>
<keyword id="KW-0444">Lipid biosynthesis</keyword>
<keyword id="KW-0443">Lipid metabolism</keyword>
<keyword id="KW-0808">Transferase</keyword>
<proteinExistence type="inferred from homology"/>
<gene>
    <name evidence="1" type="primary">lpxB</name>
    <name type="ordered locus">HPP12_0867</name>
</gene>
<comment type="function">
    <text evidence="1">Condensation of UDP-2,3-diacylglucosamine and 2,3-diacylglucosamine-1-phosphate to form lipid A disaccharide, a precursor of lipid A, a phosphorylated glycolipid that anchors the lipopolysaccharide to the outer membrane of the cell.</text>
</comment>
<comment type="catalytic activity">
    <reaction evidence="1">
        <text>a lipid X + a UDP-2-N,3-O-bis[(3R)-3-hydroxyacyl]-alpha-D-glucosamine = a lipid A disaccharide + UDP + H(+)</text>
        <dbReference type="Rhea" id="RHEA:67828"/>
        <dbReference type="ChEBI" id="CHEBI:15378"/>
        <dbReference type="ChEBI" id="CHEBI:58223"/>
        <dbReference type="ChEBI" id="CHEBI:137748"/>
        <dbReference type="ChEBI" id="CHEBI:176338"/>
        <dbReference type="ChEBI" id="CHEBI:176343"/>
        <dbReference type="EC" id="2.4.1.182"/>
    </reaction>
</comment>
<comment type="pathway">
    <text evidence="1">Bacterial outer membrane biogenesis; LPS lipid A biosynthesis.</text>
</comment>
<comment type="similarity">
    <text evidence="1">Belongs to the LpxB family.</text>
</comment>
<dbReference type="EC" id="2.4.1.182" evidence="1"/>
<dbReference type="EMBL" id="CP001217">
    <property type="protein sequence ID" value="ACJ08019.1"/>
    <property type="molecule type" value="Genomic_DNA"/>
</dbReference>
<dbReference type="SMR" id="B6JM91"/>
<dbReference type="CAZy" id="GT19">
    <property type="family name" value="Glycosyltransferase Family 19"/>
</dbReference>
<dbReference type="KEGG" id="hpp:HPP12_0867"/>
<dbReference type="HOGENOM" id="CLU_036577_3_1_7"/>
<dbReference type="UniPathway" id="UPA00973"/>
<dbReference type="Proteomes" id="UP000008198">
    <property type="component" value="Chromosome"/>
</dbReference>
<dbReference type="GO" id="GO:0016020">
    <property type="term" value="C:membrane"/>
    <property type="evidence" value="ECO:0007669"/>
    <property type="project" value="GOC"/>
</dbReference>
<dbReference type="GO" id="GO:0008915">
    <property type="term" value="F:lipid-A-disaccharide synthase activity"/>
    <property type="evidence" value="ECO:0007669"/>
    <property type="project" value="UniProtKB-UniRule"/>
</dbReference>
<dbReference type="GO" id="GO:0005543">
    <property type="term" value="F:phospholipid binding"/>
    <property type="evidence" value="ECO:0007669"/>
    <property type="project" value="TreeGrafter"/>
</dbReference>
<dbReference type="GO" id="GO:0009245">
    <property type="term" value="P:lipid A biosynthetic process"/>
    <property type="evidence" value="ECO:0007669"/>
    <property type="project" value="UniProtKB-UniRule"/>
</dbReference>
<dbReference type="HAMAP" id="MF_00392">
    <property type="entry name" value="LpxB"/>
    <property type="match status" value="1"/>
</dbReference>
<dbReference type="InterPro" id="IPR003835">
    <property type="entry name" value="Glyco_trans_19"/>
</dbReference>
<dbReference type="NCBIfam" id="TIGR00215">
    <property type="entry name" value="lpxB"/>
    <property type="match status" value="1"/>
</dbReference>
<dbReference type="PANTHER" id="PTHR30372">
    <property type="entry name" value="LIPID-A-DISACCHARIDE SYNTHASE"/>
    <property type="match status" value="1"/>
</dbReference>
<dbReference type="PANTHER" id="PTHR30372:SF4">
    <property type="entry name" value="LIPID-A-DISACCHARIDE SYNTHASE, MITOCHONDRIAL-RELATED"/>
    <property type="match status" value="1"/>
</dbReference>
<dbReference type="Pfam" id="PF02684">
    <property type="entry name" value="LpxB"/>
    <property type="match status" value="1"/>
</dbReference>
<dbReference type="SUPFAM" id="SSF53756">
    <property type="entry name" value="UDP-Glycosyltransferase/glycogen phosphorylase"/>
    <property type="match status" value="1"/>
</dbReference>
<evidence type="ECO:0000255" key="1">
    <source>
        <dbReference type="HAMAP-Rule" id="MF_00392"/>
    </source>
</evidence>
<reference key="1">
    <citation type="submission" date="2008-10" db="EMBL/GenBank/DDBJ databases">
        <title>The complete genome sequence of Helicobacter pylori strain P12.</title>
        <authorList>
            <person name="Fischer W."/>
            <person name="Windhager L."/>
            <person name="Karnholz A."/>
            <person name="Zeiller M."/>
            <person name="Zimmer R."/>
            <person name="Haas R."/>
        </authorList>
    </citation>
    <scope>NUCLEOTIDE SEQUENCE [LARGE SCALE GENOMIC DNA]</scope>
    <source>
        <strain>P12</strain>
    </source>
</reference>